<accession>Q9U6Y8</accession>
<protein>
    <recommendedName>
        <fullName>Red fluorescent protein drFP583</fullName>
        <shortName>DsRed</shortName>
    </recommendedName>
</protein>
<comment type="function">
    <text>Thought to play a role in photoprotection of the coral's resident symbiont microalgae's photosystems from photoinhibition caused by high light levels found near the surface of coral reefs. In deeper water, the fluorescence may be to convert blue light into longer wavelengths more suitable for use in photosynthesis by the microalgal symbionts.</text>
</comment>
<comment type="biophysicochemical properties">
    <absorption>
        <max>558 nm</max>
        <text>Exhibits a smaller absorbance peak at 494 nm. The broad fluorescence emission spectrum peaks at 583 nm.</text>
    </absorption>
</comment>
<comment type="subunit">
    <text evidence="1">Homotetramer.</text>
</comment>
<comment type="PTM">
    <text>Contains a chromophore consisting of modified amino acid residues. The chromophore is formed by autocatalytic backbone condensation between Xaa-N and Gly-(N+2), oxidation of Tyr-(N+1) to didehydrotyrosine, and formation of a double bond to the alpha-amino nitrogen of residue Xaa-N. Maturation of the chromophore requires nothing other than molecular oxygen.</text>
</comment>
<comment type="biotechnology">
    <text evidence="2">Fluorescent proteins have become a useful and ubiquitous tool for making chimeric proteins, where they function as a fluorescent protein tag. Typically they tolerate N- and C-terminal fusion to a broad variety of proteins. They have been expressed in most known cell types and are used as a noninvasive fluorescent marker in living cells and organisms. They enable a wide range of applications where they have functioned as a cell lineage tracer, reporter of gene expression, or as a measure of protein-protein interactions.</text>
</comment>
<comment type="similarity">
    <text evidence="2">Belongs to the GFP family.</text>
</comment>
<name>RFP_DISSP</name>
<proteinExistence type="evidence at protein level"/>
<feature type="chain" id="PRO_0000192577" description="Red fluorescent protein drFP583">
    <location>
        <begin position="1"/>
        <end position="225"/>
    </location>
</feature>
<feature type="modified residue" description="(Z)-2,3-didehydrotyrosine" evidence="1">
    <location>
        <position position="67"/>
    </location>
</feature>
<feature type="cross-link" description="2-iminomethyl-5-imidazolinone (Gln-Gly)" evidence="1">
    <location>
        <begin position="66"/>
        <end position="68"/>
    </location>
</feature>
<feature type="turn" evidence="4">
    <location>
        <begin position="5"/>
        <end position="7"/>
    </location>
</feature>
<feature type="strand" evidence="5">
    <location>
        <begin position="10"/>
        <end position="22"/>
    </location>
</feature>
<feature type="strand" evidence="5">
    <location>
        <begin position="25"/>
        <end position="36"/>
    </location>
</feature>
<feature type="turn" evidence="5">
    <location>
        <begin position="37"/>
        <end position="40"/>
    </location>
</feature>
<feature type="strand" evidence="5">
    <location>
        <begin position="41"/>
        <end position="51"/>
    </location>
</feature>
<feature type="helix" evidence="5">
    <location>
        <begin position="58"/>
        <end position="60"/>
    </location>
</feature>
<feature type="helix" evidence="5">
    <location>
        <begin position="62"/>
        <end position="64"/>
    </location>
</feature>
<feature type="helix" evidence="5">
    <location>
        <begin position="70"/>
        <end position="72"/>
    </location>
</feature>
<feature type="helix" evidence="5">
    <location>
        <begin position="82"/>
        <end position="85"/>
    </location>
</feature>
<feature type="turn" evidence="5">
    <location>
        <begin position="86"/>
        <end position="89"/>
    </location>
</feature>
<feature type="strand" evidence="5">
    <location>
        <begin position="91"/>
        <end position="99"/>
    </location>
</feature>
<feature type="strand" evidence="5">
    <location>
        <begin position="104"/>
        <end position="114"/>
    </location>
</feature>
<feature type="strand" evidence="5">
    <location>
        <begin position="117"/>
        <end position="127"/>
    </location>
</feature>
<feature type="turn" evidence="5">
    <location>
        <begin position="134"/>
        <end position="138"/>
    </location>
</feature>
<feature type="strand" evidence="5">
    <location>
        <begin position="140"/>
        <end position="143"/>
    </location>
</feature>
<feature type="strand" evidence="5">
    <location>
        <begin position="146"/>
        <end position="153"/>
    </location>
</feature>
<feature type="strand" evidence="5">
    <location>
        <begin position="156"/>
        <end position="167"/>
    </location>
</feature>
<feature type="strand" evidence="5">
    <location>
        <begin position="170"/>
        <end position="185"/>
    </location>
</feature>
<feature type="strand" evidence="5">
    <location>
        <begin position="192"/>
        <end position="204"/>
    </location>
</feature>
<feature type="strand" evidence="5">
    <location>
        <begin position="208"/>
        <end position="224"/>
    </location>
</feature>
<organism>
    <name type="scientific">Discosoma sp.</name>
    <name type="common">Sea anemone</name>
    <dbReference type="NCBI Taxonomy" id="86600"/>
    <lineage>
        <taxon>Eukaryota</taxon>
        <taxon>Metazoa</taxon>
        <taxon>Cnidaria</taxon>
        <taxon>Anthozoa</taxon>
        <taxon>Hexacorallia</taxon>
        <taxon>Corallimorpharia</taxon>
        <taxon>Discosomidae</taxon>
        <taxon>Discosoma</taxon>
    </lineage>
</organism>
<evidence type="ECO:0000269" key="1">
    <source>
    </source>
</evidence>
<evidence type="ECO:0000305" key="2"/>
<evidence type="ECO:0000312" key="3">
    <source>
        <dbReference type="EMBL" id="AAF03369.1"/>
    </source>
</evidence>
<evidence type="ECO:0007829" key="4">
    <source>
        <dbReference type="PDB" id="2VAD"/>
    </source>
</evidence>
<evidence type="ECO:0007829" key="5">
    <source>
        <dbReference type="PDB" id="7ZCT"/>
    </source>
</evidence>
<dbReference type="EMBL" id="AF168419">
    <property type="protein sequence ID" value="AAF03369.1"/>
    <property type="molecule type" value="mRNA"/>
</dbReference>
<dbReference type="PDB" id="1G7K">
    <property type="method" value="X-ray"/>
    <property type="resolution" value="2.00 A"/>
    <property type="chains" value="A/B/C/D=2-225"/>
</dbReference>
<dbReference type="PDB" id="1GGX">
    <property type="method" value="X-ray"/>
    <property type="resolution" value="1.90 A"/>
    <property type="chains" value="A/B/C/D=1-225"/>
</dbReference>
<dbReference type="PDB" id="1ZGO">
    <property type="method" value="X-ray"/>
    <property type="resolution" value="1.40 A"/>
    <property type="chains" value="A/B/C/D=1-225"/>
</dbReference>
<dbReference type="PDB" id="1ZGP">
    <property type="method" value="X-ray"/>
    <property type="resolution" value="1.90 A"/>
    <property type="chains" value="A/B/C/D=1-225"/>
</dbReference>
<dbReference type="PDB" id="1ZGQ">
    <property type="method" value="X-ray"/>
    <property type="resolution" value="1.90 A"/>
    <property type="chains" value="A/B/C/D/E/F/G/H=1-225"/>
</dbReference>
<dbReference type="PDB" id="2H5O">
    <property type="method" value="X-ray"/>
    <property type="resolution" value="1.08 A"/>
    <property type="chains" value="A/B=8-221"/>
</dbReference>
<dbReference type="PDB" id="2H5R">
    <property type="method" value="X-ray"/>
    <property type="resolution" value="1.60 A"/>
    <property type="chains" value="A=8-223"/>
</dbReference>
<dbReference type="PDB" id="2H8Q">
    <property type="method" value="X-ray"/>
    <property type="resolution" value="2.00 A"/>
    <property type="chains" value="A/B/C/D=7-225"/>
</dbReference>
<dbReference type="PDB" id="2V4E">
    <property type="method" value="X-ray"/>
    <property type="resolution" value="2.40 A"/>
    <property type="chains" value="A/B/C/D/E/F/G/H=6-225"/>
</dbReference>
<dbReference type="PDB" id="2VAD">
    <property type="method" value="X-ray"/>
    <property type="resolution" value="1.59 A"/>
    <property type="chains" value="A=7-221"/>
</dbReference>
<dbReference type="PDB" id="2VAE">
    <property type="method" value="X-ray"/>
    <property type="resolution" value="1.64 A"/>
    <property type="chains" value="A/B/C/D/E/F/G/H=3-225"/>
</dbReference>
<dbReference type="PDB" id="4I2Y">
    <property type="method" value="X-ray"/>
    <property type="resolution" value="2.20 A"/>
    <property type="chains" value="A/B=8-145"/>
</dbReference>
<dbReference type="PDB" id="4KF4">
    <property type="method" value="X-ray"/>
    <property type="resolution" value="1.99 A"/>
    <property type="chains" value="A/B/C/D/E/F/G/H=8-221"/>
</dbReference>
<dbReference type="PDB" id="4KF5">
    <property type="method" value="X-ray"/>
    <property type="resolution" value="2.60 A"/>
    <property type="chains" value="C/D=8-221"/>
</dbReference>
<dbReference type="PDB" id="5LK4">
    <property type="method" value="X-ray"/>
    <property type="resolution" value="1.47 A"/>
    <property type="chains" value="A=7-221"/>
</dbReference>
<dbReference type="PDB" id="7OIN">
    <property type="method" value="X-ray"/>
    <property type="resolution" value="1.40 A"/>
    <property type="chains" value="B=7-221"/>
</dbReference>
<dbReference type="PDB" id="7ZCT">
    <property type="method" value="X-ray"/>
    <property type="resolution" value="1.33 A"/>
    <property type="chains" value="A/B=7-224"/>
</dbReference>
<dbReference type="PDB" id="8ARM">
    <property type="method" value="X-ray"/>
    <property type="resolution" value="1.41 A"/>
    <property type="chains" value="A=7-221"/>
</dbReference>
<dbReference type="PDB" id="8B65">
    <property type="method" value="X-ray"/>
    <property type="resolution" value="1.55 A"/>
    <property type="chains" value="A=8-221"/>
</dbReference>
<dbReference type="PDB" id="8B7G">
    <property type="method" value="X-ray"/>
    <property type="resolution" value="1.30 A"/>
    <property type="chains" value="A=8-221"/>
</dbReference>
<dbReference type="PDB" id="8BGL">
    <property type="method" value="X-ray"/>
    <property type="resolution" value="2.00 A"/>
    <property type="chains" value="A/B=8-221"/>
</dbReference>
<dbReference type="PDB" id="8QJ2">
    <property type="method" value="EM"/>
    <property type="resolution" value="3.40 A"/>
    <property type="chains" value="A=8-221"/>
</dbReference>
<dbReference type="PDBsum" id="1G7K"/>
<dbReference type="PDBsum" id="1GGX"/>
<dbReference type="PDBsum" id="1ZGO"/>
<dbReference type="PDBsum" id="1ZGP"/>
<dbReference type="PDBsum" id="1ZGQ"/>
<dbReference type="PDBsum" id="2H5O"/>
<dbReference type="PDBsum" id="2H5R"/>
<dbReference type="PDBsum" id="2H8Q"/>
<dbReference type="PDBsum" id="2V4E"/>
<dbReference type="PDBsum" id="2VAD"/>
<dbReference type="PDBsum" id="2VAE"/>
<dbReference type="PDBsum" id="4I2Y"/>
<dbReference type="PDBsum" id="4KF4"/>
<dbReference type="PDBsum" id="4KF5"/>
<dbReference type="PDBsum" id="5LK4"/>
<dbReference type="PDBsum" id="7OIN"/>
<dbReference type="PDBsum" id="7ZCT"/>
<dbReference type="PDBsum" id="8ARM"/>
<dbReference type="PDBsum" id="8B65"/>
<dbReference type="PDBsum" id="8B7G"/>
<dbReference type="PDBsum" id="8BGL"/>
<dbReference type="PDBsum" id="8QJ2"/>
<dbReference type="EMDB" id="EMD-18442"/>
<dbReference type="EMDB" id="EMD-3334"/>
<dbReference type="EMDB" id="EMD-3335"/>
<dbReference type="EMDB" id="EMD-3336"/>
<dbReference type="SMR" id="Q9U6Y8"/>
<dbReference type="EvolutionaryTrace" id="Q9U6Y8"/>
<dbReference type="GO" id="GO:0008218">
    <property type="term" value="P:bioluminescence"/>
    <property type="evidence" value="ECO:0007669"/>
    <property type="project" value="UniProtKB-KW"/>
</dbReference>
<dbReference type="GO" id="GO:0006091">
    <property type="term" value="P:generation of precursor metabolites and energy"/>
    <property type="evidence" value="ECO:0007669"/>
    <property type="project" value="InterPro"/>
</dbReference>
<dbReference type="Gene3D" id="3.30.1300.40">
    <property type="match status" value="1"/>
</dbReference>
<dbReference type="Gene3D" id="2.40.155.10">
    <property type="entry name" value="Green fluorescent protein"/>
    <property type="match status" value="1"/>
</dbReference>
<dbReference type="InterPro" id="IPR009017">
    <property type="entry name" value="GFP"/>
</dbReference>
<dbReference type="InterPro" id="IPR011584">
    <property type="entry name" value="GFP-related"/>
</dbReference>
<dbReference type="InterPro" id="IPR000786">
    <property type="entry name" value="Green_fluorescent_prot"/>
</dbReference>
<dbReference type="Pfam" id="PF01353">
    <property type="entry name" value="GFP"/>
    <property type="match status" value="1"/>
</dbReference>
<dbReference type="PRINTS" id="PR01229">
    <property type="entry name" value="GFLUORESCENT"/>
</dbReference>
<dbReference type="SUPFAM" id="SSF54511">
    <property type="entry name" value="GFP-like"/>
    <property type="match status" value="1"/>
</dbReference>
<keyword id="KW-0002">3D-structure</keyword>
<keyword id="KW-0157">Chromophore</keyword>
<keyword id="KW-0455">Luminescence</keyword>
<keyword id="KW-0599">Photoprotein</keyword>
<reference evidence="3" key="1">
    <citation type="journal article" date="1999" name="Nat. Biotechnol.">
        <title>Fluorescent proteins from nonbioluminescent Anthozoa species.</title>
        <authorList>
            <person name="Matz M.V."/>
            <person name="Fradkov A.F."/>
            <person name="Labas Y.A."/>
            <person name="Savitsky A.P."/>
            <person name="Zaraisky A.G."/>
            <person name="Markelov M.L."/>
            <person name="Lukyanov S.A."/>
        </authorList>
    </citation>
    <scope>NUCLEOTIDE SEQUENCE [MRNA]</scope>
</reference>
<reference evidence="2" key="2">
    <citation type="journal article" date="2000" name="Nat. Struct. Biol.">
        <title>The structural basis for red fluorescence in the tetrameric GFP homolog DsRed.</title>
        <authorList>
            <person name="Wall M.A."/>
            <person name="Socolich M."/>
            <person name="Ranganathan R."/>
        </authorList>
    </citation>
    <scope>X-RAY CRYSTALLOGRAPHY (1.9 ANGSTROMS)</scope>
</reference>
<reference evidence="2" key="3">
    <citation type="journal article" date="2001" name="Proc. Natl. Acad. Sci. U.S.A.">
        <title>Refined crystal structure of DsRed, a red fluorescent protein from coral, at 2.0-A resolution.</title>
        <authorList>
            <person name="Yarbrough D."/>
            <person name="Wachter R.M."/>
            <person name="Kallio K."/>
            <person name="Matz M.V."/>
            <person name="Remington S.J."/>
        </authorList>
    </citation>
    <scope>X-RAY CRYSTALLOGRAPHY (2.0 ANGSTROMS)</scope>
    <scope>SUBUNIT</scope>
    <scope>DEHYDROGENATION AT TYR-67</scope>
</reference>
<sequence length="225" mass="25931">MRSSKNVIKEFMRFKVRMEGTVNGHEFEIEGEGEGRPYEGHNTVKLKVTKGGPLPFAWDILSPQFQYGSKVYVKHPADIPDYKKLSFPEGFKWERVMNFEDGGVVTVTQDSSLQDGCFIYKVKFIGVNFPSDGPVMQKKTMGWEASTERLYPRDGVLKGEIHKALKLKDGGHYLVEFKSIYMAKKPVQLPGYYYVDSKLDITSHNEDYTIVEQYERTEGRHHLFL</sequence>